<gene>
    <name evidence="1" type="primary">queC</name>
    <name type="ordered locus">Mevan_1240</name>
</gene>
<comment type="function">
    <text evidence="1">Catalyzes the ATP-dependent conversion of 7-carboxy-7-deazaguanine (CDG) to 7-cyano-7-deazaguanine (preQ(0)).</text>
</comment>
<comment type="catalytic activity">
    <reaction evidence="1">
        <text>7-carboxy-7-deazaguanine + NH4(+) + ATP = 7-cyano-7-deazaguanine + ADP + phosphate + H2O + H(+)</text>
        <dbReference type="Rhea" id="RHEA:27982"/>
        <dbReference type="ChEBI" id="CHEBI:15377"/>
        <dbReference type="ChEBI" id="CHEBI:15378"/>
        <dbReference type="ChEBI" id="CHEBI:28938"/>
        <dbReference type="ChEBI" id="CHEBI:30616"/>
        <dbReference type="ChEBI" id="CHEBI:43474"/>
        <dbReference type="ChEBI" id="CHEBI:45075"/>
        <dbReference type="ChEBI" id="CHEBI:61036"/>
        <dbReference type="ChEBI" id="CHEBI:456216"/>
        <dbReference type="EC" id="6.3.4.20"/>
    </reaction>
</comment>
<comment type="cofactor">
    <cofactor evidence="1">
        <name>Zn(2+)</name>
        <dbReference type="ChEBI" id="CHEBI:29105"/>
    </cofactor>
    <text evidence="1">Binds 1 zinc ion per subunit.</text>
</comment>
<comment type="pathway">
    <text evidence="1">Purine metabolism; 7-cyano-7-deazaguanine biosynthesis.</text>
</comment>
<comment type="similarity">
    <text evidence="1">Belongs to the QueC family.</text>
</comment>
<proteinExistence type="inferred from homology"/>
<protein>
    <recommendedName>
        <fullName evidence="1">7-cyano-7-deazaguanine synthase</fullName>
        <ecNumber evidence="1">6.3.4.20</ecNumber>
    </recommendedName>
    <alternativeName>
        <fullName evidence="1">7-cyano-7-carbaguanine synthase</fullName>
    </alternativeName>
    <alternativeName>
        <fullName evidence="1">Archaeosine biosynthesis protein QueC</fullName>
    </alternativeName>
    <alternativeName>
        <fullName evidence="1">PreQ(0) synthase</fullName>
    </alternativeName>
</protein>
<keyword id="KW-0067">ATP-binding</keyword>
<keyword id="KW-0436">Ligase</keyword>
<keyword id="KW-0479">Metal-binding</keyword>
<keyword id="KW-0547">Nucleotide-binding</keyword>
<keyword id="KW-0862">Zinc</keyword>
<organism>
    <name type="scientific">Methanococcus vannielii (strain ATCC 35089 / DSM 1224 / JCM 13029 / OCM 148 / SB)</name>
    <dbReference type="NCBI Taxonomy" id="406327"/>
    <lineage>
        <taxon>Archaea</taxon>
        <taxon>Methanobacteriati</taxon>
        <taxon>Methanobacteriota</taxon>
        <taxon>Methanomada group</taxon>
        <taxon>Methanococci</taxon>
        <taxon>Methanococcales</taxon>
        <taxon>Methanococcaceae</taxon>
        <taxon>Methanococcus</taxon>
    </lineage>
</organism>
<evidence type="ECO:0000255" key="1">
    <source>
        <dbReference type="HAMAP-Rule" id="MF_01633"/>
    </source>
</evidence>
<dbReference type="EC" id="6.3.4.20" evidence="1"/>
<dbReference type="EMBL" id="CP000742">
    <property type="protein sequence ID" value="ABR55137.1"/>
    <property type="molecule type" value="Genomic_DNA"/>
</dbReference>
<dbReference type="RefSeq" id="WP_012066052.1">
    <property type="nucleotide sequence ID" value="NC_009634.1"/>
</dbReference>
<dbReference type="SMR" id="A6URL5"/>
<dbReference type="STRING" id="406327.Mevan_1240"/>
<dbReference type="GeneID" id="5324938"/>
<dbReference type="KEGG" id="mvn:Mevan_1240"/>
<dbReference type="eggNOG" id="arCOG00039">
    <property type="taxonomic scope" value="Archaea"/>
</dbReference>
<dbReference type="HOGENOM" id="CLU_081854_1_1_2"/>
<dbReference type="OrthoDB" id="6532at2157"/>
<dbReference type="UniPathway" id="UPA00391"/>
<dbReference type="Proteomes" id="UP000001107">
    <property type="component" value="Chromosome"/>
</dbReference>
<dbReference type="GO" id="GO:0005524">
    <property type="term" value="F:ATP binding"/>
    <property type="evidence" value="ECO:0007669"/>
    <property type="project" value="UniProtKB-UniRule"/>
</dbReference>
<dbReference type="GO" id="GO:0016879">
    <property type="term" value="F:ligase activity, forming carbon-nitrogen bonds"/>
    <property type="evidence" value="ECO:0007669"/>
    <property type="project" value="UniProtKB-UniRule"/>
</dbReference>
<dbReference type="GO" id="GO:0008270">
    <property type="term" value="F:zinc ion binding"/>
    <property type="evidence" value="ECO:0007669"/>
    <property type="project" value="UniProtKB-UniRule"/>
</dbReference>
<dbReference type="CDD" id="cd01995">
    <property type="entry name" value="QueC-like"/>
    <property type="match status" value="1"/>
</dbReference>
<dbReference type="Gene3D" id="3.40.50.620">
    <property type="entry name" value="HUPs"/>
    <property type="match status" value="1"/>
</dbReference>
<dbReference type="HAMAP" id="MF_01633">
    <property type="entry name" value="QueC"/>
    <property type="match status" value="1"/>
</dbReference>
<dbReference type="InterPro" id="IPR018317">
    <property type="entry name" value="QueC"/>
</dbReference>
<dbReference type="InterPro" id="IPR014729">
    <property type="entry name" value="Rossmann-like_a/b/a_fold"/>
</dbReference>
<dbReference type="NCBIfam" id="TIGR00364">
    <property type="entry name" value="7-cyano-7-deazaguanine synthase QueC"/>
    <property type="match status" value="1"/>
</dbReference>
<dbReference type="PANTHER" id="PTHR42914">
    <property type="entry name" value="7-CYANO-7-DEAZAGUANINE SYNTHASE"/>
    <property type="match status" value="1"/>
</dbReference>
<dbReference type="PANTHER" id="PTHR42914:SF1">
    <property type="entry name" value="7-CYANO-7-DEAZAGUANINE SYNTHASE"/>
    <property type="match status" value="1"/>
</dbReference>
<dbReference type="Pfam" id="PF06508">
    <property type="entry name" value="QueC"/>
    <property type="match status" value="1"/>
</dbReference>
<dbReference type="PIRSF" id="PIRSF006293">
    <property type="entry name" value="ExsB"/>
    <property type="match status" value="1"/>
</dbReference>
<dbReference type="SUPFAM" id="SSF52402">
    <property type="entry name" value="Adenine nucleotide alpha hydrolases-like"/>
    <property type="match status" value="1"/>
</dbReference>
<feature type="chain" id="PRO_1000069782" description="7-cyano-7-deazaguanine synthase">
    <location>
        <begin position="1"/>
        <end position="233"/>
    </location>
</feature>
<feature type="binding site" evidence="1">
    <location>
        <begin position="7"/>
        <end position="17"/>
    </location>
    <ligand>
        <name>ATP</name>
        <dbReference type="ChEBI" id="CHEBI:30616"/>
    </ligand>
</feature>
<feature type="binding site" evidence="1">
    <location>
        <position position="195"/>
    </location>
    <ligand>
        <name>Zn(2+)</name>
        <dbReference type="ChEBI" id="CHEBI:29105"/>
    </ligand>
</feature>
<feature type="binding site" evidence="1">
    <location>
        <position position="206"/>
    </location>
    <ligand>
        <name>Zn(2+)</name>
        <dbReference type="ChEBI" id="CHEBI:29105"/>
    </ligand>
</feature>
<feature type="binding site" evidence="1">
    <location>
        <position position="209"/>
    </location>
    <ligand>
        <name>Zn(2+)</name>
        <dbReference type="ChEBI" id="CHEBI:29105"/>
    </ligand>
</feature>
<feature type="binding site" evidence="1">
    <location>
        <position position="212"/>
    </location>
    <ligand>
        <name>Zn(2+)</name>
        <dbReference type="ChEBI" id="CHEBI:29105"/>
    </ligand>
</feature>
<reference key="1">
    <citation type="submission" date="2007-06" db="EMBL/GenBank/DDBJ databases">
        <title>Complete sequence of Methanococcus vannielii SB.</title>
        <authorList>
            <consortium name="US DOE Joint Genome Institute"/>
            <person name="Copeland A."/>
            <person name="Lucas S."/>
            <person name="Lapidus A."/>
            <person name="Barry K."/>
            <person name="Glavina del Rio T."/>
            <person name="Dalin E."/>
            <person name="Tice H."/>
            <person name="Pitluck S."/>
            <person name="Chain P."/>
            <person name="Malfatti S."/>
            <person name="Shin M."/>
            <person name="Vergez L."/>
            <person name="Schmutz J."/>
            <person name="Larimer F."/>
            <person name="Land M."/>
            <person name="Hauser L."/>
            <person name="Kyrpides N."/>
            <person name="Anderson I."/>
            <person name="Sieprawska-Lupa M."/>
            <person name="Whitman W.B."/>
            <person name="Richardson P."/>
        </authorList>
    </citation>
    <scope>NUCLEOTIDE SEQUENCE [LARGE SCALE GENOMIC DNA]</scope>
    <source>
        <strain>ATCC 35089 / DSM 1224 / JCM 13029 / OCM 148 / SB</strain>
    </source>
</reference>
<sequence>MKAISVLSGGLDSLVTSMVAKKENSEIATVTFNYGQMALDKELKSAKKISKVLGAENQVFDISFVKEFSKSGLNTGNIPNPKKDDLDDFKESEKTMKSVWVPARNMIMFSIASGFAEGINAEKIYSGLNKEEGVTFPDNSTEFINSFNKSLEYGTLNKVKMYAPLYNLDKVEIATFGKRLEDELGLDILKYSYSCYRDNLKDYLHCGTCESCMRRKRAFESAGIVDPTNYILQ</sequence>
<accession>A6URL5</accession>
<name>QUEC_METVS</name>